<feature type="chain" id="PRO_0000321711" description="Ribosome maturation factor RimM">
    <location>
        <begin position="1"/>
        <end position="173"/>
    </location>
</feature>
<feature type="domain" description="PRC barrel" evidence="1">
    <location>
        <begin position="94"/>
        <end position="173"/>
    </location>
</feature>
<evidence type="ECO:0000255" key="1">
    <source>
        <dbReference type="HAMAP-Rule" id="MF_00014"/>
    </source>
</evidence>
<organism>
    <name type="scientific">Aeromonas salmonicida (strain A449)</name>
    <dbReference type="NCBI Taxonomy" id="382245"/>
    <lineage>
        <taxon>Bacteria</taxon>
        <taxon>Pseudomonadati</taxon>
        <taxon>Pseudomonadota</taxon>
        <taxon>Gammaproteobacteria</taxon>
        <taxon>Aeromonadales</taxon>
        <taxon>Aeromonadaceae</taxon>
        <taxon>Aeromonas</taxon>
    </lineage>
</organism>
<dbReference type="EMBL" id="CP000644">
    <property type="protein sequence ID" value="ABO88830.1"/>
    <property type="molecule type" value="Genomic_DNA"/>
</dbReference>
<dbReference type="RefSeq" id="WP_005313510.1">
    <property type="nucleotide sequence ID" value="NC_009348.1"/>
</dbReference>
<dbReference type="SMR" id="A4SIV8"/>
<dbReference type="STRING" id="29491.GCA_000820065_01826"/>
<dbReference type="GeneID" id="79878206"/>
<dbReference type="KEGG" id="asa:ASA_0667"/>
<dbReference type="eggNOG" id="COG0806">
    <property type="taxonomic scope" value="Bacteria"/>
</dbReference>
<dbReference type="HOGENOM" id="CLU_077636_1_0_6"/>
<dbReference type="Proteomes" id="UP000000225">
    <property type="component" value="Chromosome"/>
</dbReference>
<dbReference type="GO" id="GO:0005737">
    <property type="term" value="C:cytoplasm"/>
    <property type="evidence" value="ECO:0007669"/>
    <property type="project" value="UniProtKB-SubCell"/>
</dbReference>
<dbReference type="GO" id="GO:0005840">
    <property type="term" value="C:ribosome"/>
    <property type="evidence" value="ECO:0007669"/>
    <property type="project" value="InterPro"/>
</dbReference>
<dbReference type="GO" id="GO:0043022">
    <property type="term" value="F:ribosome binding"/>
    <property type="evidence" value="ECO:0007669"/>
    <property type="project" value="InterPro"/>
</dbReference>
<dbReference type="GO" id="GO:0042274">
    <property type="term" value="P:ribosomal small subunit biogenesis"/>
    <property type="evidence" value="ECO:0007669"/>
    <property type="project" value="UniProtKB-UniRule"/>
</dbReference>
<dbReference type="GO" id="GO:0006364">
    <property type="term" value="P:rRNA processing"/>
    <property type="evidence" value="ECO:0007669"/>
    <property type="project" value="UniProtKB-UniRule"/>
</dbReference>
<dbReference type="Gene3D" id="2.30.30.240">
    <property type="entry name" value="PRC-barrel domain"/>
    <property type="match status" value="1"/>
</dbReference>
<dbReference type="Gene3D" id="2.40.30.60">
    <property type="entry name" value="RimM"/>
    <property type="match status" value="1"/>
</dbReference>
<dbReference type="HAMAP" id="MF_00014">
    <property type="entry name" value="Ribosome_mat_RimM"/>
    <property type="match status" value="1"/>
</dbReference>
<dbReference type="InterPro" id="IPR011033">
    <property type="entry name" value="PRC_barrel-like_sf"/>
</dbReference>
<dbReference type="InterPro" id="IPR056792">
    <property type="entry name" value="PRC_RimM"/>
</dbReference>
<dbReference type="InterPro" id="IPR011961">
    <property type="entry name" value="RimM"/>
</dbReference>
<dbReference type="InterPro" id="IPR002676">
    <property type="entry name" value="RimM_N"/>
</dbReference>
<dbReference type="InterPro" id="IPR036976">
    <property type="entry name" value="RimM_N_sf"/>
</dbReference>
<dbReference type="InterPro" id="IPR009000">
    <property type="entry name" value="Transl_B-barrel_sf"/>
</dbReference>
<dbReference type="NCBIfam" id="TIGR02273">
    <property type="entry name" value="16S_RimM"/>
    <property type="match status" value="1"/>
</dbReference>
<dbReference type="PANTHER" id="PTHR33692">
    <property type="entry name" value="RIBOSOME MATURATION FACTOR RIMM"/>
    <property type="match status" value="1"/>
</dbReference>
<dbReference type="PANTHER" id="PTHR33692:SF1">
    <property type="entry name" value="RIBOSOME MATURATION FACTOR RIMM"/>
    <property type="match status" value="1"/>
</dbReference>
<dbReference type="Pfam" id="PF24986">
    <property type="entry name" value="PRC_RimM"/>
    <property type="match status" value="1"/>
</dbReference>
<dbReference type="Pfam" id="PF01782">
    <property type="entry name" value="RimM"/>
    <property type="match status" value="1"/>
</dbReference>
<dbReference type="SUPFAM" id="SSF50346">
    <property type="entry name" value="PRC-barrel domain"/>
    <property type="match status" value="1"/>
</dbReference>
<dbReference type="SUPFAM" id="SSF50447">
    <property type="entry name" value="Translation proteins"/>
    <property type="match status" value="1"/>
</dbReference>
<comment type="function">
    <text evidence="1">An accessory protein needed during the final step in the assembly of 30S ribosomal subunit, possibly for assembly of the head region. Essential for efficient processing of 16S rRNA. May be needed both before and after RbfA during the maturation of 16S rRNA. It has affinity for free ribosomal 30S subunits but not for 70S ribosomes.</text>
</comment>
<comment type="subunit">
    <text evidence="1">Binds ribosomal protein uS19.</text>
</comment>
<comment type="subcellular location">
    <subcellularLocation>
        <location evidence="1">Cytoplasm</location>
    </subcellularLocation>
</comment>
<comment type="domain">
    <text evidence="1">The PRC barrel domain binds ribosomal protein uS19.</text>
</comment>
<comment type="similarity">
    <text evidence="1">Belongs to the RimM family.</text>
</comment>
<proteinExistence type="inferred from homology"/>
<reference key="1">
    <citation type="journal article" date="2008" name="BMC Genomics">
        <title>The genome of Aeromonas salmonicida subsp. salmonicida A449: insights into the evolution of a fish pathogen.</title>
        <authorList>
            <person name="Reith M.E."/>
            <person name="Singh R.K."/>
            <person name="Curtis B."/>
            <person name="Boyd J.M."/>
            <person name="Bouevitch A."/>
            <person name="Kimball J."/>
            <person name="Munholland J."/>
            <person name="Murphy C."/>
            <person name="Sarty D."/>
            <person name="Williams J."/>
            <person name="Nash J.H."/>
            <person name="Johnson S.C."/>
            <person name="Brown L.L."/>
        </authorList>
    </citation>
    <scope>NUCLEOTIDE SEQUENCE [LARGE SCALE GENOMIC DNA]</scope>
    <source>
        <strain>A449</strain>
    </source>
</reference>
<accession>A4SIV8</accession>
<gene>
    <name evidence="1" type="primary">rimM</name>
    <name type="ordered locus">ASA_0667</name>
</gene>
<keyword id="KW-0143">Chaperone</keyword>
<keyword id="KW-0963">Cytoplasm</keyword>
<keyword id="KW-0690">Ribosome biogenesis</keyword>
<keyword id="KW-0698">rRNA processing</keyword>
<sequence>MEKPVVLGTLGTVYGIKGWLKVNSFTDVAEAIFDYNPWMINQNGVWRELKVSAWKRHNKGLICKIDGIDLREDALALTNVEIGVPADLLPALPEGEFYWRDLIGCSVSTTKGYDLGKVTELMETGSNDVLVVEANVKDAFGAKERLIPFLEEQVIKHIDLTARTIEVDWDPGF</sequence>
<protein>
    <recommendedName>
        <fullName evidence="1">Ribosome maturation factor RimM</fullName>
    </recommendedName>
</protein>
<name>RIMM_AERS4</name>